<gene>
    <name evidence="9" type="ORF">DAPPUDRAFT_205384</name>
</gene>
<name>IYD_DAPPU</name>
<dbReference type="EC" id="1.21.1.1" evidence="5"/>
<dbReference type="EMBL" id="GL732523">
    <property type="protein sequence ID" value="EFX90111.1"/>
    <property type="molecule type" value="Genomic_DNA"/>
</dbReference>
<dbReference type="SMR" id="E9FR69"/>
<dbReference type="STRING" id="6669.E9FR69"/>
<dbReference type="KEGG" id="dpx:DAPPUDRAFT_205384"/>
<dbReference type="eggNOG" id="KOG3936">
    <property type="taxonomic scope" value="Eukaryota"/>
</dbReference>
<dbReference type="HOGENOM" id="CLU_070764_1_0_1"/>
<dbReference type="InParanoid" id="E9FR69"/>
<dbReference type="OMA" id="GANHQPW"/>
<dbReference type="OrthoDB" id="41362at2759"/>
<dbReference type="PhylomeDB" id="E9FR69"/>
<dbReference type="Proteomes" id="UP000000305">
    <property type="component" value="Unassembled WGS sequence"/>
</dbReference>
<dbReference type="GO" id="GO:0005886">
    <property type="term" value="C:plasma membrane"/>
    <property type="evidence" value="ECO:0000318"/>
    <property type="project" value="GO_Central"/>
</dbReference>
<dbReference type="GO" id="GO:0010181">
    <property type="term" value="F:FMN binding"/>
    <property type="evidence" value="ECO:0000314"/>
    <property type="project" value="UniProtKB"/>
</dbReference>
<dbReference type="GO" id="GO:0140616">
    <property type="term" value="F:iodotyrosine deiodinase activity"/>
    <property type="evidence" value="ECO:0000314"/>
    <property type="project" value="UniProtKB"/>
</dbReference>
<dbReference type="GO" id="GO:0016491">
    <property type="term" value="F:oxidoreductase activity"/>
    <property type="evidence" value="ECO:0000318"/>
    <property type="project" value="GO_Central"/>
</dbReference>
<dbReference type="GO" id="GO:0006570">
    <property type="term" value="P:tyrosine metabolic process"/>
    <property type="evidence" value="ECO:0000318"/>
    <property type="project" value="GO_Central"/>
</dbReference>
<dbReference type="CDD" id="cd02144">
    <property type="entry name" value="iodotyrosine_dehalogenase"/>
    <property type="match status" value="1"/>
</dbReference>
<dbReference type="FunFam" id="3.40.109.10:FF:000004">
    <property type="entry name" value="Iodotyrosine deiodinase 1"/>
    <property type="match status" value="1"/>
</dbReference>
<dbReference type="Gene3D" id="3.40.109.10">
    <property type="entry name" value="NADH Oxidase"/>
    <property type="match status" value="1"/>
</dbReference>
<dbReference type="InterPro" id="IPR029479">
    <property type="entry name" value="Nitroreductase"/>
</dbReference>
<dbReference type="InterPro" id="IPR000415">
    <property type="entry name" value="Nitroreductase-like"/>
</dbReference>
<dbReference type="InterPro" id="IPR050627">
    <property type="entry name" value="Nitroreductase/BluB"/>
</dbReference>
<dbReference type="PANTHER" id="PTHR23026:SF90">
    <property type="entry name" value="IODOTYROSINE DEIODINASE 1"/>
    <property type="match status" value="1"/>
</dbReference>
<dbReference type="PANTHER" id="PTHR23026">
    <property type="entry name" value="NADPH NITROREDUCTASE"/>
    <property type="match status" value="1"/>
</dbReference>
<dbReference type="Pfam" id="PF00881">
    <property type="entry name" value="Nitroreductase"/>
    <property type="match status" value="1"/>
</dbReference>
<dbReference type="SUPFAM" id="SSF55469">
    <property type="entry name" value="FMN-dependent nitroreductase-like"/>
    <property type="match status" value="1"/>
</dbReference>
<sequence length="300" mass="34084">MENYVPFLVSHWRTVGLISVSIAAGVALGQLNQTHERAANKSQRVHTNSSIKAKQVKRESAIEQINEIEDDDEQSLEDQDVLPILFQYEKPSEADSIRRSEEFYRRMNQRRSVREISSDPVALEVIENIIKTGGTSPSGAHTEPWTFVVVSNLEMKQQIRQIIEAEEEINYKQRMGDVWVQDLQPVGTTWVKEYLTEAPWLILIFKQVHGFKRNGQKKIHYYNEISVSIATGFLLAAIQEAGLVTVTTTPLNCGPSIRVLLGRPVNEKLLLLLPVGYPKVGATVPDFKRKPLHDIMVHYQ</sequence>
<proteinExistence type="evidence at protein level"/>
<accession>E9FR69</accession>
<comment type="function">
    <text evidence="2 5">Catalyzes the dehalogenation of halotyrosines such as 3,5-diiodo-L-tyrosine (PubMed:24153409). Likely to also catalyze the dehalogenation of other halotyrosines such as 3-bromo-L-tyrosine, 3-chloro-L-tyrosine and 3-iodo-L-tyrosine (By similarity).</text>
</comment>
<comment type="catalytic activity">
    <reaction evidence="5">
        <text>2 iodide + L-tyrosine + 2 NADP(+) = 3,5-diiodo-L-tyrosine + 2 NADPH + H(+)</text>
        <dbReference type="Rhea" id="RHEA:32479"/>
        <dbReference type="ChEBI" id="CHEBI:15378"/>
        <dbReference type="ChEBI" id="CHEBI:16382"/>
        <dbReference type="ChEBI" id="CHEBI:57506"/>
        <dbReference type="ChEBI" id="CHEBI:57783"/>
        <dbReference type="ChEBI" id="CHEBI:58315"/>
        <dbReference type="ChEBI" id="CHEBI:58349"/>
        <dbReference type="EC" id="1.21.1.1"/>
    </reaction>
    <physiologicalReaction direction="right-to-left" evidence="5">
        <dbReference type="Rhea" id="RHEA:32481"/>
    </physiologicalReaction>
</comment>
<comment type="catalytic activity">
    <reaction evidence="2">
        <text>iodide + L-tyrosine + NADP(+) = 3-iodo-L-tyrosine + NADPH</text>
        <dbReference type="Rhea" id="RHEA:27453"/>
        <dbReference type="ChEBI" id="CHEBI:16382"/>
        <dbReference type="ChEBI" id="CHEBI:57783"/>
        <dbReference type="ChEBI" id="CHEBI:58315"/>
        <dbReference type="ChEBI" id="CHEBI:58349"/>
        <dbReference type="ChEBI" id="CHEBI:59898"/>
    </reaction>
    <physiologicalReaction direction="right-to-left" evidence="2">
        <dbReference type="Rhea" id="RHEA:27455"/>
    </physiologicalReaction>
</comment>
<comment type="catalytic activity">
    <reaction evidence="5">
        <text>3-iodo-L-tyrosine + iodide + NADP(+) = 3,5-diiodo-L-tyrosine + NADPH + H(+)</text>
        <dbReference type="Rhea" id="RHEA:27457"/>
        <dbReference type="ChEBI" id="CHEBI:15378"/>
        <dbReference type="ChEBI" id="CHEBI:16382"/>
        <dbReference type="ChEBI" id="CHEBI:57506"/>
        <dbReference type="ChEBI" id="CHEBI:57783"/>
        <dbReference type="ChEBI" id="CHEBI:58349"/>
        <dbReference type="ChEBI" id="CHEBI:59898"/>
    </reaction>
    <physiologicalReaction direction="right-to-left" evidence="5">
        <dbReference type="Rhea" id="RHEA:27459"/>
    </physiologicalReaction>
</comment>
<comment type="catalytic activity">
    <reaction evidence="2">
        <text>L-tyrosine + chloride + NADP(+) = 3-chloro-L-tyrosine + NADPH</text>
        <dbReference type="Rhea" id="RHEA:70343"/>
        <dbReference type="ChEBI" id="CHEBI:17996"/>
        <dbReference type="ChEBI" id="CHEBI:57783"/>
        <dbReference type="ChEBI" id="CHEBI:58315"/>
        <dbReference type="ChEBI" id="CHEBI:58349"/>
        <dbReference type="ChEBI" id="CHEBI:189422"/>
    </reaction>
    <physiologicalReaction direction="right-to-left" evidence="2">
        <dbReference type="Rhea" id="RHEA:70345"/>
    </physiologicalReaction>
</comment>
<comment type="catalytic activity">
    <reaction evidence="2">
        <text>bromide + L-tyrosine + NADP(+) = 3-bromo-L-tyrosine + NADPH</text>
        <dbReference type="Rhea" id="RHEA:70347"/>
        <dbReference type="ChEBI" id="CHEBI:15858"/>
        <dbReference type="ChEBI" id="CHEBI:57783"/>
        <dbReference type="ChEBI" id="CHEBI:58315"/>
        <dbReference type="ChEBI" id="CHEBI:58349"/>
        <dbReference type="ChEBI" id="CHEBI:189423"/>
    </reaction>
    <physiologicalReaction direction="right-to-left" evidence="2">
        <dbReference type="Rhea" id="RHEA:70349"/>
    </physiologicalReaction>
</comment>
<comment type="cofactor">
    <cofactor evidence="1">
        <name>FMN</name>
        <dbReference type="ChEBI" id="CHEBI:58210"/>
    </cofactor>
</comment>
<comment type="biophysicochemical properties">
    <kinetics>
        <KM evidence="5">7 uM for diiodotyrosine (L-DIT)</KM>
        <text evidence="5">Kcat 17.6 min(-1) for the deiodination of diiodotyrosine (L-DIT).</text>
    </kinetics>
</comment>
<comment type="subcellular location">
    <subcellularLocation>
        <location evidence="4">Membrane</location>
        <topology evidence="4">Single-pass membrane protein</topology>
    </subcellularLocation>
</comment>
<comment type="PTM">
    <text evidence="5">May be cleaved at Gln-55 (PubMed:24153409). The cleaved form retains catalytic activity (PubMed:24153409).</text>
</comment>
<comment type="similarity">
    <text evidence="7">Belongs to the nitroreductase family.</text>
</comment>
<organism evidence="10">
    <name type="scientific">Daphnia pulex</name>
    <name type="common">Water flea</name>
    <dbReference type="NCBI Taxonomy" id="6669"/>
    <lineage>
        <taxon>Eukaryota</taxon>
        <taxon>Metazoa</taxon>
        <taxon>Ecdysozoa</taxon>
        <taxon>Arthropoda</taxon>
        <taxon>Crustacea</taxon>
        <taxon>Branchiopoda</taxon>
        <taxon>Diplostraca</taxon>
        <taxon>Cladocera</taxon>
        <taxon>Anomopoda</taxon>
        <taxon>Daphniidae</taxon>
        <taxon>Daphnia</taxon>
    </lineage>
</organism>
<reference evidence="10" key="1">
    <citation type="journal article" date="2011" name="Science">
        <title>The ecoresponsive genome of Daphnia pulex.</title>
        <authorList>
            <person name="Colbourne J.K."/>
            <person name="Pfrender M.E."/>
            <person name="Gilbert D."/>
            <person name="Thomas W.K."/>
            <person name="Tucker A."/>
            <person name="Oakley T.H."/>
            <person name="Tokishita S."/>
            <person name="Aerts A."/>
            <person name="Arnold G.J."/>
            <person name="Basu M.K."/>
            <person name="Bauer D.J."/>
            <person name="Caceres C.E."/>
            <person name="Carmel L."/>
            <person name="Casola C."/>
            <person name="Choi J.H."/>
            <person name="Detter J.C."/>
            <person name="Dong Q."/>
            <person name="Dusheyko S."/>
            <person name="Eads B.D."/>
            <person name="Frohlich T."/>
            <person name="Geiler-Samerotte K.A."/>
            <person name="Gerlach D."/>
            <person name="Hatcher P."/>
            <person name="Jogdeo S."/>
            <person name="Krijgsveld J."/>
            <person name="Kriventseva E.V."/>
            <person name="Kultz D."/>
            <person name="Laforsch C."/>
            <person name="Lindquist E."/>
            <person name="Lopez J."/>
            <person name="Manak J.R."/>
            <person name="Muller J."/>
            <person name="Pangilinan J."/>
            <person name="Patwardhan R.P."/>
            <person name="Pitluck S."/>
            <person name="Pritham E.J."/>
            <person name="Rechtsteiner A."/>
            <person name="Rho M."/>
            <person name="Rogozin I.B."/>
            <person name="Sakarya O."/>
            <person name="Salamov A."/>
            <person name="Schaack S."/>
            <person name="Shapiro H."/>
            <person name="Shiga Y."/>
            <person name="Skalitzky C."/>
            <person name="Smith Z."/>
            <person name="Souvorov A."/>
            <person name="Sung W."/>
            <person name="Tang Z."/>
            <person name="Tsuchiya D."/>
            <person name="Tu H."/>
            <person name="Vos H."/>
            <person name="Wang M."/>
            <person name="Wolf Y.I."/>
            <person name="Yamagata H."/>
            <person name="Yamada T."/>
            <person name="Ye Y."/>
            <person name="Shaw J.R."/>
            <person name="Andrews J."/>
            <person name="Crease T.J."/>
            <person name="Tang H."/>
            <person name="Lucas S.M."/>
            <person name="Robertson H.M."/>
            <person name="Bork P."/>
            <person name="Koonin E.V."/>
            <person name="Zdobnov E.M."/>
            <person name="Grigoriev I.V."/>
            <person name="Lynch M."/>
            <person name="Boore J.L."/>
        </authorList>
    </citation>
    <scope>NUCLEOTIDE SEQUENCE [LARGE SCALE GENOMIC DNA]</scope>
</reference>
<reference evidence="7" key="2">
    <citation type="journal article" date="2014" name="Mol. Biosyst.">
        <title>Iodotyrosine deiodinase: a unique flavoprotein present in organisms of diverse phyla.</title>
        <authorList>
            <person name="Phatarphekar A."/>
            <person name="Buss J.M."/>
            <person name="Rokita S.E."/>
        </authorList>
    </citation>
    <scope>PARTIAL PROTEIN SEQUENCE</scope>
    <scope>FUNCTION</scope>
    <scope>CATALYTIC ACTIVITY</scope>
    <scope>PROTEOLYTIC CLEAVAGE</scope>
    <scope>BIOPHYSICOCHEMICAL PROPERTIES</scope>
    <scope>COFACTOR</scope>
</reference>
<protein>
    <recommendedName>
        <fullName evidence="6">Iodotyrosine deiodinase</fullName>
        <ecNumber evidence="5">1.21.1.1</ecNumber>
    </recommendedName>
    <alternativeName>
        <fullName evidence="8">Halotyrosine dehalogenase</fullName>
    </alternativeName>
</protein>
<evidence type="ECO:0000250" key="1">
    <source>
        <dbReference type="UniProtKB" id="E1JIB2"/>
    </source>
</evidence>
<evidence type="ECO:0000250" key="2">
    <source>
        <dbReference type="UniProtKB" id="Q6PHW0"/>
    </source>
</evidence>
<evidence type="ECO:0000250" key="3">
    <source>
        <dbReference type="UniProtKB" id="Q9DCX8"/>
    </source>
</evidence>
<evidence type="ECO:0000255" key="4"/>
<evidence type="ECO:0000269" key="5">
    <source>
    </source>
</evidence>
<evidence type="ECO:0000303" key="6">
    <source>
    </source>
</evidence>
<evidence type="ECO:0000305" key="7"/>
<evidence type="ECO:0000305" key="8">
    <source>
    </source>
</evidence>
<evidence type="ECO:0000312" key="9">
    <source>
        <dbReference type="EMBL" id="EFX90111.1"/>
    </source>
</evidence>
<evidence type="ECO:0000312" key="10">
    <source>
        <dbReference type="Proteomes" id="UP000000305"/>
    </source>
</evidence>
<feature type="chain" id="PRO_0000455640" description="Iodotyrosine deiodinase">
    <location>
        <begin position="1"/>
        <end position="300"/>
    </location>
</feature>
<feature type="transmembrane region" description="Helical" evidence="4">
    <location>
        <begin position="15"/>
        <end position="31"/>
    </location>
</feature>
<feature type="binding site" evidence="2">
    <location>
        <begin position="110"/>
        <end position="114"/>
    </location>
    <ligand>
        <name>FMN</name>
        <dbReference type="ChEBI" id="CHEBI:58210"/>
    </ligand>
</feature>
<feature type="binding site" evidence="3">
    <location>
        <begin position="138"/>
        <end position="139"/>
    </location>
    <ligand>
        <name>FMN</name>
        <dbReference type="ChEBI" id="CHEBI:58210"/>
    </ligand>
</feature>
<feature type="binding site" evidence="2">
    <location>
        <position position="138"/>
    </location>
    <ligand>
        <name>FMN</name>
        <dbReference type="ChEBI" id="CHEBI:58210"/>
    </ligand>
</feature>
<feature type="binding site" evidence="3">
    <location>
        <position position="140"/>
    </location>
    <ligand>
        <name>3,5-diiodo-L-tyrosine</name>
        <dbReference type="ChEBI" id="CHEBI:57506"/>
    </ligand>
</feature>
<feature type="binding site" evidence="3">
    <location>
        <position position="140"/>
    </location>
    <ligand>
        <name>3-iodo-L-tyrosine</name>
        <dbReference type="ChEBI" id="CHEBI:59898"/>
    </ligand>
</feature>
<feature type="binding site" evidence="1">
    <location>
        <position position="167"/>
    </location>
    <ligand>
        <name>3,5-diiodo-L-tyrosine</name>
        <dbReference type="ChEBI" id="CHEBI:57506"/>
    </ligand>
</feature>
<feature type="binding site" evidence="1">
    <location>
        <position position="167"/>
    </location>
    <ligand>
        <name>3-iodo-L-tyrosine</name>
        <dbReference type="ChEBI" id="CHEBI:59898"/>
    </ligand>
</feature>
<feature type="binding site" evidence="1">
    <location>
        <position position="171"/>
    </location>
    <ligand>
        <name>3,5-diiodo-L-tyrosine</name>
        <dbReference type="ChEBI" id="CHEBI:57506"/>
    </ligand>
</feature>
<feature type="binding site" evidence="1">
    <location>
        <position position="171"/>
    </location>
    <ligand>
        <name>3-iodo-L-tyrosine</name>
        <dbReference type="ChEBI" id="CHEBI:59898"/>
    </ligand>
</feature>
<feature type="binding site" evidence="1">
    <location>
        <position position="192"/>
    </location>
    <ligand>
        <name>3,5-diiodo-L-tyrosine</name>
        <dbReference type="ChEBI" id="CHEBI:57506"/>
    </ligand>
</feature>
<feature type="binding site" evidence="1">
    <location>
        <position position="192"/>
    </location>
    <ligand>
        <name>3-iodo-L-tyrosine</name>
        <dbReference type="ChEBI" id="CHEBI:59898"/>
    </ligand>
</feature>
<feature type="binding site" evidence="2">
    <location>
        <begin position="247"/>
        <end position="249"/>
    </location>
    <ligand>
        <name>FMN</name>
        <dbReference type="ChEBI" id="CHEBI:58210"/>
    </ligand>
</feature>
<feature type="binding site" evidence="2">
    <location>
        <position position="289"/>
    </location>
    <ligand>
        <name>FMN</name>
        <dbReference type="ChEBI" id="CHEBI:58210"/>
    </ligand>
</feature>
<keyword id="KW-0903">Direct protein sequencing</keyword>
<keyword id="KW-0285">Flavoprotein</keyword>
<keyword id="KW-0288">FMN</keyword>
<keyword id="KW-0472">Membrane</keyword>
<keyword id="KW-0521">NADP</keyword>
<keyword id="KW-0560">Oxidoreductase</keyword>
<keyword id="KW-1185">Reference proteome</keyword>
<keyword id="KW-0812">Transmembrane</keyword>
<keyword id="KW-1133">Transmembrane helix</keyword>